<protein>
    <recommendedName>
        <fullName>Threonine synthase</fullName>
        <shortName>TS</shortName>
        <ecNumber>4.2.3.1</ecNumber>
    </recommendedName>
</protein>
<evidence type="ECO:0000250" key="1">
    <source>
        <dbReference type="UniProtKB" id="P16120"/>
    </source>
</evidence>
<evidence type="ECO:0000269" key="2">
    <source>
    </source>
</evidence>
<evidence type="ECO:0000305" key="3"/>
<gene>
    <name type="primary">thrc</name>
    <name type="ORF">SPAC9E9.06c</name>
</gene>
<keyword id="KW-0028">Amino-acid biosynthesis</keyword>
<keyword id="KW-0456">Lyase</keyword>
<keyword id="KW-0597">Phosphoprotein</keyword>
<keyword id="KW-0663">Pyridoxal phosphate</keyword>
<keyword id="KW-1185">Reference proteome</keyword>
<keyword id="KW-0791">Threonine biosynthesis</keyword>
<proteinExistence type="evidence at protein level"/>
<sequence>MSSQVSYLSTRGGSSNFSFEEAVLKGLANDGGLFIPSEIPQLPSGWIEAWKDKSFPEIAFEVMSLYIPRSEISADELKKLVDRSYSTFRHPETTPLKSLKNGLNVLELFHGPTFAFKDVALQFLGNLFEFFLTRKNGNKPEDERDHLTVVGATSGDTGSAAIYGLRGKKDVSVFILFPNGRVSPIQEAQMTTVTDPNVHCITVNGVFDDCQDLVKQIFGDVEFNKKHHIGAVNSINWARILSQITYYLYSYLSVYKQGKADDVRFIVPTGNFGDILAGYYAKRMGLPTKQLVIATNENDILNRFFKTGRYEKADSTQVSPSGPISAKETYSPAMDILVSSNFERYLWYLALATEAPNHTPAEASEILSRWMNEFKRDGTVTVRPEVLEAARRDFVSERVSNDETIDAIKKIYESDHYIIDPHTAVGVETGLRCLEKTKDQDITYICLSTAHPAKFDKAVNLALSSYSDYNFNTQVLPIEFDGLLDEERTCIFSGKPNIDILKQIIEVTLSREKA</sequence>
<reference key="1">
    <citation type="submission" date="1997-10" db="EMBL/GenBank/DDBJ databases">
        <title>Isolation of cDNA encoding threonine synthase from Schizosaccharomyces pombe by functional expression in Saccharomyces cerevisiae.</title>
        <authorList>
            <person name="Aas S.F."/>
            <person name="Rognes S.E."/>
        </authorList>
    </citation>
    <scope>NUCLEOTIDE SEQUENCE [MRNA]</scope>
    <source>
        <strain>972 / ATCC 24843</strain>
    </source>
</reference>
<reference key="2">
    <citation type="journal article" date="2002" name="Nature">
        <title>The genome sequence of Schizosaccharomyces pombe.</title>
        <authorList>
            <person name="Wood V."/>
            <person name="Gwilliam R."/>
            <person name="Rajandream M.A."/>
            <person name="Lyne M.H."/>
            <person name="Lyne R."/>
            <person name="Stewart A."/>
            <person name="Sgouros J.G."/>
            <person name="Peat N."/>
            <person name="Hayles J."/>
            <person name="Baker S.G."/>
            <person name="Basham D."/>
            <person name="Bowman S."/>
            <person name="Brooks K."/>
            <person name="Brown D."/>
            <person name="Brown S."/>
            <person name="Chillingworth T."/>
            <person name="Churcher C.M."/>
            <person name="Collins M."/>
            <person name="Connor R."/>
            <person name="Cronin A."/>
            <person name="Davis P."/>
            <person name="Feltwell T."/>
            <person name="Fraser A."/>
            <person name="Gentles S."/>
            <person name="Goble A."/>
            <person name="Hamlin N."/>
            <person name="Harris D.E."/>
            <person name="Hidalgo J."/>
            <person name="Hodgson G."/>
            <person name="Holroyd S."/>
            <person name="Hornsby T."/>
            <person name="Howarth S."/>
            <person name="Huckle E.J."/>
            <person name="Hunt S."/>
            <person name="Jagels K."/>
            <person name="James K.D."/>
            <person name="Jones L."/>
            <person name="Jones M."/>
            <person name="Leather S."/>
            <person name="McDonald S."/>
            <person name="McLean J."/>
            <person name="Mooney P."/>
            <person name="Moule S."/>
            <person name="Mungall K.L."/>
            <person name="Murphy L.D."/>
            <person name="Niblett D."/>
            <person name="Odell C."/>
            <person name="Oliver K."/>
            <person name="O'Neil S."/>
            <person name="Pearson D."/>
            <person name="Quail M.A."/>
            <person name="Rabbinowitsch E."/>
            <person name="Rutherford K.M."/>
            <person name="Rutter S."/>
            <person name="Saunders D."/>
            <person name="Seeger K."/>
            <person name="Sharp S."/>
            <person name="Skelton J."/>
            <person name="Simmonds M.N."/>
            <person name="Squares R."/>
            <person name="Squares S."/>
            <person name="Stevens K."/>
            <person name="Taylor K."/>
            <person name="Taylor R.G."/>
            <person name="Tivey A."/>
            <person name="Walsh S.V."/>
            <person name="Warren T."/>
            <person name="Whitehead S."/>
            <person name="Woodward J.R."/>
            <person name="Volckaert G."/>
            <person name="Aert R."/>
            <person name="Robben J."/>
            <person name="Grymonprez B."/>
            <person name="Weltjens I."/>
            <person name="Vanstreels E."/>
            <person name="Rieger M."/>
            <person name="Schaefer M."/>
            <person name="Mueller-Auer S."/>
            <person name="Gabel C."/>
            <person name="Fuchs M."/>
            <person name="Duesterhoeft A."/>
            <person name="Fritzc C."/>
            <person name="Holzer E."/>
            <person name="Moestl D."/>
            <person name="Hilbert H."/>
            <person name="Borzym K."/>
            <person name="Langer I."/>
            <person name="Beck A."/>
            <person name="Lehrach H."/>
            <person name="Reinhardt R."/>
            <person name="Pohl T.M."/>
            <person name="Eger P."/>
            <person name="Zimmermann W."/>
            <person name="Wedler H."/>
            <person name="Wambutt R."/>
            <person name="Purnelle B."/>
            <person name="Goffeau A."/>
            <person name="Cadieu E."/>
            <person name="Dreano S."/>
            <person name="Gloux S."/>
            <person name="Lelaure V."/>
            <person name="Mottier S."/>
            <person name="Galibert F."/>
            <person name="Aves S.J."/>
            <person name="Xiang Z."/>
            <person name="Hunt C."/>
            <person name="Moore K."/>
            <person name="Hurst S.M."/>
            <person name="Lucas M."/>
            <person name="Rochet M."/>
            <person name="Gaillardin C."/>
            <person name="Tallada V.A."/>
            <person name="Garzon A."/>
            <person name="Thode G."/>
            <person name="Daga R.R."/>
            <person name="Cruzado L."/>
            <person name="Jimenez J."/>
            <person name="Sanchez M."/>
            <person name="del Rey F."/>
            <person name="Benito J."/>
            <person name="Dominguez A."/>
            <person name="Revuelta J.L."/>
            <person name="Moreno S."/>
            <person name="Armstrong J."/>
            <person name="Forsburg S.L."/>
            <person name="Cerutti L."/>
            <person name="Lowe T."/>
            <person name="McCombie W.R."/>
            <person name="Paulsen I."/>
            <person name="Potashkin J."/>
            <person name="Shpakovski G.V."/>
            <person name="Ussery D."/>
            <person name="Barrell B.G."/>
            <person name="Nurse P."/>
        </authorList>
    </citation>
    <scope>NUCLEOTIDE SEQUENCE [LARGE SCALE GENOMIC DNA]</scope>
    <source>
        <strain>972 / ATCC 24843</strain>
    </source>
</reference>
<reference key="3">
    <citation type="journal article" date="1997" name="DNA Res.">
        <title>Identification of open reading frames in Schizosaccharomyces pombe cDNAs.</title>
        <authorList>
            <person name="Yoshioka S."/>
            <person name="Kato K."/>
            <person name="Nakai K."/>
            <person name="Okayama H."/>
            <person name="Nojima H."/>
        </authorList>
    </citation>
    <scope>NUCLEOTIDE SEQUENCE [LARGE SCALE MRNA] OF 147-514</scope>
    <source>
        <strain>PR745</strain>
    </source>
</reference>
<reference key="4">
    <citation type="journal article" date="2008" name="J. Proteome Res.">
        <title>Phosphoproteome analysis of fission yeast.</title>
        <authorList>
            <person name="Wilson-Grady J.T."/>
            <person name="Villen J."/>
            <person name="Gygi S.P."/>
        </authorList>
    </citation>
    <scope>PHOSPHORYLATION [LARGE SCALE ANALYSIS] AT SER-319 AND SER-321</scope>
    <scope>IDENTIFICATION BY MASS SPECTROMETRY</scope>
</reference>
<dbReference type="EC" id="4.2.3.1"/>
<dbReference type="EMBL" id="Z46263">
    <property type="protein sequence ID" value="CAA86405.1"/>
    <property type="molecule type" value="mRNA"/>
</dbReference>
<dbReference type="EMBL" id="CU329670">
    <property type="protein sequence ID" value="CAB16415.1"/>
    <property type="molecule type" value="Genomic_DNA"/>
</dbReference>
<dbReference type="EMBL" id="D89190">
    <property type="protein sequence ID" value="BAA13852.1"/>
    <property type="molecule type" value="mRNA"/>
</dbReference>
<dbReference type="PIR" id="T39213">
    <property type="entry name" value="T39213"/>
</dbReference>
<dbReference type="PIR" id="T42748">
    <property type="entry name" value="T42748"/>
</dbReference>
<dbReference type="RefSeq" id="NP_594579.1">
    <property type="nucleotide sequence ID" value="NM_001020008.2"/>
</dbReference>
<dbReference type="SMR" id="Q42598"/>
<dbReference type="BioGRID" id="279107">
    <property type="interactions" value="1"/>
</dbReference>
<dbReference type="FunCoup" id="Q42598">
    <property type="interactions" value="142"/>
</dbReference>
<dbReference type="STRING" id="284812.Q42598"/>
<dbReference type="iPTMnet" id="Q42598"/>
<dbReference type="PaxDb" id="4896-SPAC9E9.06c.1"/>
<dbReference type="EnsemblFungi" id="SPAC9E9.06c.1">
    <property type="protein sequence ID" value="SPAC9E9.06c.1:pep"/>
    <property type="gene ID" value="SPAC9E9.06c"/>
</dbReference>
<dbReference type="KEGG" id="spo:2542653"/>
<dbReference type="PomBase" id="SPAC9E9.06c"/>
<dbReference type="VEuPathDB" id="FungiDB:SPAC9E9.06c"/>
<dbReference type="eggNOG" id="KOG2616">
    <property type="taxonomic scope" value="Eukaryota"/>
</dbReference>
<dbReference type="HOGENOM" id="CLU_015170_1_0_1"/>
<dbReference type="InParanoid" id="Q42598"/>
<dbReference type="OMA" id="NFERYLY"/>
<dbReference type="PhylomeDB" id="Q42598"/>
<dbReference type="UniPathway" id="UPA00050">
    <property type="reaction ID" value="UER00065"/>
</dbReference>
<dbReference type="PRO" id="PR:Q42598"/>
<dbReference type="Proteomes" id="UP000002485">
    <property type="component" value="Chromosome I"/>
</dbReference>
<dbReference type="GO" id="GO:0005829">
    <property type="term" value="C:cytosol"/>
    <property type="evidence" value="ECO:0007005"/>
    <property type="project" value="PomBase"/>
</dbReference>
<dbReference type="GO" id="GO:0005634">
    <property type="term" value="C:nucleus"/>
    <property type="evidence" value="ECO:0007005"/>
    <property type="project" value="PomBase"/>
</dbReference>
<dbReference type="GO" id="GO:0030170">
    <property type="term" value="F:pyridoxal phosphate binding"/>
    <property type="evidence" value="ECO:0000250"/>
    <property type="project" value="UniProtKB"/>
</dbReference>
<dbReference type="GO" id="GO:0004795">
    <property type="term" value="F:threonine synthase activity"/>
    <property type="evidence" value="ECO:0000318"/>
    <property type="project" value="GO_Central"/>
</dbReference>
<dbReference type="GO" id="GO:0009088">
    <property type="term" value="P:threonine biosynthetic process"/>
    <property type="evidence" value="ECO:0000318"/>
    <property type="project" value="GO_Central"/>
</dbReference>
<dbReference type="CDD" id="cd01560">
    <property type="entry name" value="Thr-synth_2"/>
    <property type="match status" value="1"/>
</dbReference>
<dbReference type="FunFam" id="3.40.50.1100:FF:000046">
    <property type="entry name" value="THR4p Threonine synthase"/>
    <property type="match status" value="1"/>
</dbReference>
<dbReference type="FunFam" id="3.90.1380.10:FF:000003">
    <property type="entry name" value="THR4p Threonine synthase"/>
    <property type="match status" value="1"/>
</dbReference>
<dbReference type="Gene3D" id="3.40.50.1100">
    <property type="match status" value="2"/>
</dbReference>
<dbReference type="Gene3D" id="3.90.1380.10">
    <property type="entry name" value="Threonine synthase, N-terminal domain"/>
    <property type="match status" value="1"/>
</dbReference>
<dbReference type="InterPro" id="IPR000634">
    <property type="entry name" value="Ser/Thr_deHydtase_PyrdxlP-BS"/>
</dbReference>
<dbReference type="InterPro" id="IPR029144">
    <property type="entry name" value="Thr_synth_N"/>
</dbReference>
<dbReference type="InterPro" id="IPR037158">
    <property type="entry name" value="Thr_synth_N_sf"/>
</dbReference>
<dbReference type="InterPro" id="IPR004450">
    <property type="entry name" value="Thr_synthase-like"/>
</dbReference>
<dbReference type="InterPro" id="IPR051166">
    <property type="entry name" value="Threonine_Synthase"/>
</dbReference>
<dbReference type="InterPro" id="IPR001926">
    <property type="entry name" value="TrpB-like_PALP"/>
</dbReference>
<dbReference type="InterPro" id="IPR036052">
    <property type="entry name" value="TrpB-like_PALP_sf"/>
</dbReference>
<dbReference type="NCBIfam" id="TIGR00260">
    <property type="entry name" value="thrC"/>
    <property type="match status" value="1"/>
</dbReference>
<dbReference type="PANTHER" id="PTHR42690">
    <property type="entry name" value="THREONINE SYNTHASE FAMILY MEMBER"/>
    <property type="match status" value="1"/>
</dbReference>
<dbReference type="PANTHER" id="PTHR42690:SF1">
    <property type="entry name" value="THREONINE SYNTHASE-LIKE 2"/>
    <property type="match status" value="1"/>
</dbReference>
<dbReference type="Pfam" id="PF00291">
    <property type="entry name" value="PALP"/>
    <property type="match status" value="1"/>
</dbReference>
<dbReference type="Pfam" id="PF24857">
    <property type="entry name" value="THR4_C"/>
    <property type="match status" value="1"/>
</dbReference>
<dbReference type="Pfam" id="PF14821">
    <property type="entry name" value="Thr_synth_N"/>
    <property type="match status" value="1"/>
</dbReference>
<dbReference type="SUPFAM" id="SSF53686">
    <property type="entry name" value="Tryptophan synthase beta subunit-like PLP-dependent enzymes"/>
    <property type="match status" value="1"/>
</dbReference>
<dbReference type="PROSITE" id="PS00165">
    <property type="entry name" value="DEHYDRATASE_SER_THR"/>
    <property type="match status" value="1"/>
</dbReference>
<feature type="chain" id="PRO_0000185644" description="Threonine synthase">
    <location>
        <begin position="1"/>
        <end position="514"/>
    </location>
</feature>
<feature type="binding site" evidence="1">
    <location>
        <position position="270"/>
    </location>
    <ligand>
        <name>pyridoxal 5'-phosphate</name>
        <dbReference type="ChEBI" id="CHEBI:597326"/>
    </ligand>
</feature>
<feature type="binding site" evidence="1">
    <location>
        <position position="271"/>
    </location>
    <ligand>
        <name>pyridoxal 5'-phosphate</name>
        <dbReference type="ChEBI" id="CHEBI:597326"/>
    </ligand>
</feature>
<feature type="binding site" evidence="1">
    <location>
        <position position="272"/>
    </location>
    <ligand>
        <name>pyridoxal 5'-phosphate</name>
        <dbReference type="ChEBI" id="CHEBI:597326"/>
    </ligand>
</feature>
<feature type="binding site" evidence="1">
    <location>
        <position position="274"/>
    </location>
    <ligand>
        <name>pyridoxal 5'-phosphate</name>
        <dbReference type="ChEBI" id="CHEBI:597326"/>
    </ligand>
</feature>
<feature type="binding site" evidence="1">
    <location>
        <position position="449"/>
    </location>
    <ligand>
        <name>pyridoxal 5'-phosphate</name>
        <dbReference type="ChEBI" id="CHEBI:597326"/>
    </ligand>
</feature>
<feature type="modified residue" description="N6-(pyridoxal phosphate)lysine" evidence="1">
    <location>
        <position position="117"/>
    </location>
</feature>
<feature type="modified residue" description="Phosphoserine" evidence="2">
    <location>
        <position position="319"/>
    </location>
</feature>
<feature type="modified residue" description="Phosphoserine" evidence="2">
    <location>
        <position position="321"/>
    </location>
</feature>
<feature type="sequence conflict" description="In Ref. 3; BAA13852." evidence="3" ref="3">
    <original>SV</original>
    <variation>PA</variation>
    <location>
        <begin position="253"/>
        <end position="254"/>
    </location>
</feature>
<feature type="sequence conflict" description="In Ref. 3; BAA13852." evidence="3" ref="3">
    <original>C</original>
    <variation>W</variation>
    <location>
        <position position="446"/>
    </location>
</feature>
<feature type="sequence conflict" description="In Ref. 3; BAA13852." evidence="3" ref="3">
    <original>D</original>
    <variation>G</variation>
    <location>
        <position position="456"/>
    </location>
</feature>
<feature type="sequence conflict" description="In Ref. 3; BAA13852." evidence="3" ref="3">
    <original>V</original>
    <variation>G</variation>
    <location>
        <position position="459"/>
    </location>
</feature>
<organism>
    <name type="scientific">Schizosaccharomyces pombe (strain 972 / ATCC 24843)</name>
    <name type="common">Fission yeast</name>
    <dbReference type="NCBI Taxonomy" id="284812"/>
    <lineage>
        <taxon>Eukaryota</taxon>
        <taxon>Fungi</taxon>
        <taxon>Dikarya</taxon>
        <taxon>Ascomycota</taxon>
        <taxon>Taphrinomycotina</taxon>
        <taxon>Schizosaccharomycetes</taxon>
        <taxon>Schizosaccharomycetales</taxon>
        <taxon>Schizosaccharomycetaceae</taxon>
        <taxon>Schizosaccharomyces</taxon>
    </lineage>
</organism>
<accession>Q42598</accession>
<accession>P78841</accession>
<comment type="function">
    <text evidence="1">Catalyzes the gamma-elimination of phosphate from L-phosphohomoserine and the beta-addition of water to produce L-threonine.</text>
</comment>
<comment type="catalytic activity">
    <reaction evidence="1">
        <text>O-phospho-L-homoserine + H2O = L-threonine + phosphate</text>
        <dbReference type="Rhea" id="RHEA:10840"/>
        <dbReference type="ChEBI" id="CHEBI:15377"/>
        <dbReference type="ChEBI" id="CHEBI:43474"/>
        <dbReference type="ChEBI" id="CHEBI:57590"/>
        <dbReference type="ChEBI" id="CHEBI:57926"/>
        <dbReference type="EC" id="4.2.3.1"/>
    </reaction>
    <physiologicalReaction direction="left-to-right" evidence="1">
        <dbReference type="Rhea" id="RHEA:10841"/>
    </physiologicalReaction>
</comment>
<comment type="cofactor">
    <cofactor evidence="1">
        <name>pyridoxal 5'-phosphate</name>
        <dbReference type="ChEBI" id="CHEBI:597326"/>
    </cofactor>
</comment>
<comment type="pathway">
    <text evidence="1">Amino-acid biosynthesis; L-threonine biosynthesis; L-threonine from L-aspartate: step 5/5.</text>
</comment>
<comment type="similarity">
    <text evidence="3">Belongs to the threonine synthase family.</text>
</comment>
<comment type="caution">
    <text evidence="3">Was originally (Ref.1) thought to originate from A.thaliana.</text>
</comment>
<name>THRC_SCHPO</name>